<protein>
    <recommendedName>
        <fullName evidence="1">Small ribosomal subunit protein uS17</fullName>
    </recommendedName>
    <alternativeName>
        <fullName evidence="2">30S ribosomal protein S17</fullName>
    </alternativeName>
</protein>
<organism>
    <name type="scientific">Helicobacter pylori (strain J99 / ATCC 700824)</name>
    <name type="common">Campylobacter pylori J99</name>
    <dbReference type="NCBI Taxonomy" id="85963"/>
    <lineage>
        <taxon>Bacteria</taxon>
        <taxon>Pseudomonadati</taxon>
        <taxon>Campylobacterota</taxon>
        <taxon>Epsilonproteobacteria</taxon>
        <taxon>Campylobacterales</taxon>
        <taxon>Helicobacteraceae</taxon>
        <taxon>Helicobacter</taxon>
    </lineage>
</organism>
<proteinExistence type="inferred from homology"/>
<accession>P66450</accession>
<accession>P56024</accession>
<gene>
    <name evidence="1" type="primary">rpsQ</name>
    <name type="ordered locus">jhp_1230</name>
</gene>
<comment type="function">
    <text evidence="1">One of the primary rRNA binding proteins, it binds specifically to the 5'-end of 16S ribosomal RNA.</text>
</comment>
<comment type="subunit">
    <text evidence="1">Part of the 30S ribosomal subunit.</text>
</comment>
<comment type="similarity">
    <text evidence="1">Belongs to the universal ribosomal protein uS17 family.</text>
</comment>
<keyword id="KW-0687">Ribonucleoprotein</keyword>
<keyword id="KW-0689">Ribosomal protein</keyword>
<keyword id="KW-0694">RNA-binding</keyword>
<keyword id="KW-0699">rRNA-binding</keyword>
<feature type="chain" id="PRO_0000128462" description="Small ribosomal subunit protein uS17">
    <location>
        <begin position="1"/>
        <end position="86"/>
    </location>
</feature>
<sequence length="86" mass="9939">MNTKEPHKRLVQGKVISKFAEKSAVILVERKVVHEKYRKIVKKFKKYTIHDENNQVKVGDFVSAIECRPLSKTKSFTLKEILVVGV</sequence>
<dbReference type="EMBL" id="AE001439">
    <property type="protein sequence ID" value="AAD06796.1"/>
    <property type="molecule type" value="Genomic_DNA"/>
</dbReference>
<dbReference type="RefSeq" id="WP_001092746.1">
    <property type="nucleotide sequence ID" value="NZ_CP011330.1"/>
</dbReference>
<dbReference type="SMR" id="P66450"/>
<dbReference type="KEGG" id="hpj:jhp_1230"/>
<dbReference type="PATRIC" id="fig|85963.30.peg.1341"/>
<dbReference type="eggNOG" id="COG0186">
    <property type="taxonomic scope" value="Bacteria"/>
</dbReference>
<dbReference type="Proteomes" id="UP000000804">
    <property type="component" value="Chromosome"/>
</dbReference>
<dbReference type="GO" id="GO:0022627">
    <property type="term" value="C:cytosolic small ribosomal subunit"/>
    <property type="evidence" value="ECO:0007669"/>
    <property type="project" value="TreeGrafter"/>
</dbReference>
<dbReference type="GO" id="GO:0019843">
    <property type="term" value="F:rRNA binding"/>
    <property type="evidence" value="ECO:0007669"/>
    <property type="project" value="UniProtKB-UniRule"/>
</dbReference>
<dbReference type="GO" id="GO:0003735">
    <property type="term" value="F:structural constituent of ribosome"/>
    <property type="evidence" value="ECO:0007669"/>
    <property type="project" value="InterPro"/>
</dbReference>
<dbReference type="GO" id="GO:0006412">
    <property type="term" value="P:translation"/>
    <property type="evidence" value="ECO:0007669"/>
    <property type="project" value="UniProtKB-UniRule"/>
</dbReference>
<dbReference type="CDD" id="cd00364">
    <property type="entry name" value="Ribosomal_uS17"/>
    <property type="match status" value="1"/>
</dbReference>
<dbReference type="FunFam" id="2.40.50.140:FF:000108">
    <property type="entry name" value="30S ribosomal protein S17"/>
    <property type="match status" value="1"/>
</dbReference>
<dbReference type="Gene3D" id="2.40.50.140">
    <property type="entry name" value="Nucleic acid-binding proteins"/>
    <property type="match status" value="1"/>
</dbReference>
<dbReference type="HAMAP" id="MF_01345_B">
    <property type="entry name" value="Ribosomal_uS17_B"/>
    <property type="match status" value="1"/>
</dbReference>
<dbReference type="InterPro" id="IPR012340">
    <property type="entry name" value="NA-bd_OB-fold"/>
</dbReference>
<dbReference type="InterPro" id="IPR000266">
    <property type="entry name" value="Ribosomal_uS17"/>
</dbReference>
<dbReference type="InterPro" id="IPR019984">
    <property type="entry name" value="Ribosomal_uS17_bact/chlr"/>
</dbReference>
<dbReference type="InterPro" id="IPR019979">
    <property type="entry name" value="Ribosomal_uS17_CS"/>
</dbReference>
<dbReference type="NCBIfam" id="NF004123">
    <property type="entry name" value="PRK05610.1"/>
    <property type="match status" value="1"/>
</dbReference>
<dbReference type="NCBIfam" id="TIGR03635">
    <property type="entry name" value="uS17_bact"/>
    <property type="match status" value="1"/>
</dbReference>
<dbReference type="PANTHER" id="PTHR10744">
    <property type="entry name" value="40S RIBOSOMAL PROTEIN S11 FAMILY MEMBER"/>
    <property type="match status" value="1"/>
</dbReference>
<dbReference type="PANTHER" id="PTHR10744:SF1">
    <property type="entry name" value="SMALL RIBOSOMAL SUBUNIT PROTEIN US17M"/>
    <property type="match status" value="1"/>
</dbReference>
<dbReference type="Pfam" id="PF00366">
    <property type="entry name" value="Ribosomal_S17"/>
    <property type="match status" value="1"/>
</dbReference>
<dbReference type="PRINTS" id="PR00973">
    <property type="entry name" value="RIBOSOMALS17"/>
</dbReference>
<dbReference type="SUPFAM" id="SSF50249">
    <property type="entry name" value="Nucleic acid-binding proteins"/>
    <property type="match status" value="1"/>
</dbReference>
<dbReference type="PROSITE" id="PS00056">
    <property type="entry name" value="RIBOSOMAL_S17"/>
    <property type="match status" value="1"/>
</dbReference>
<evidence type="ECO:0000255" key="1">
    <source>
        <dbReference type="HAMAP-Rule" id="MF_01345"/>
    </source>
</evidence>
<evidence type="ECO:0000305" key="2"/>
<name>RS17_HELPJ</name>
<reference key="1">
    <citation type="journal article" date="1999" name="Nature">
        <title>Genomic sequence comparison of two unrelated isolates of the human gastric pathogen Helicobacter pylori.</title>
        <authorList>
            <person name="Alm R.A."/>
            <person name="Ling L.-S.L."/>
            <person name="Moir D.T."/>
            <person name="King B.L."/>
            <person name="Brown E.D."/>
            <person name="Doig P.C."/>
            <person name="Smith D.R."/>
            <person name="Noonan B."/>
            <person name="Guild B.C."/>
            <person name="deJonge B.L."/>
            <person name="Carmel G."/>
            <person name="Tummino P.J."/>
            <person name="Caruso A."/>
            <person name="Uria-Nickelsen M."/>
            <person name="Mills D.M."/>
            <person name="Ives C."/>
            <person name="Gibson R."/>
            <person name="Merberg D."/>
            <person name="Mills S.D."/>
            <person name="Jiang Q."/>
            <person name="Taylor D.E."/>
            <person name="Vovis G.F."/>
            <person name="Trust T.J."/>
        </authorList>
    </citation>
    <scope>NUCLEOTIDE SEQUENCE [LARGE SCALE GENOMIC DNA]</scope>
    <source>
        <strain>J99 / ATCC 700824</strain>
    </source>
</reference>